<accession>A3P0Y4</accession>
<dbReference type="EC" id="4.1.1.37" evidence="1"/>
<dbReference type="EMBL" id="CP000572">
    <property type="protein sequence ID" value="ABN89018.1"/>
    <property type="molecule type" value="Genomic_DNA"/>
</dbReference>
<dbReference type="RefSeq" id="WP_004533505.1">
    <property type="nucleotide sequence ID" value="NC_009076.1"/>
</dbReference>
<dbReference type="SMR" id="A3P0Y4"/>
<dbReference type="GeneID" id="93062019"/>
<dbReference type="KEGG" id="bpl:BURPS1106A_4036"/>
<dbReference type="HOGENOM" id="CLU_040933_0_0_4"/>
<dbReference type="UniPathway" id="UPA00251">
    <property type="reaction ID" value="UER00321"/>
</dbReference>
<dbReference type="Proteomes" id="UP000006738">
    <property type="component" value="Chromosome I"/>
</dbReference>
<dbReference type="GO" id="GO:0005829">
    <property type="term" value="C:cytosol"/>
    <property type="evidence" value="ECO:0007669"/>
    <property type="project" value="TreeGrafter"/>
</dbReference>
<dbReference type="GO" id="GO:0004853">
    <property type="term" value="F:uroporphyrinogen decarboxylase activity"/>
    <property type="evidence" value="ECO:0007669"/>
    <property type="project" value="UniProtKB-UniRule"/>
</dbReference>
<dbReference type="GO" id="GO:0019353">
    <property type="term" value="P:protoporphyrinogen IX biosynthetic process from glutamate"/>
    <property type="evidence" value="ECO:0007669"/>
    <property type="project" value="TreeGrafter"/>
</dbReference>
<dbReference type="CDD" id="cd00717">
    <property type="entry name" value="URO-D"/>
    <property type="match status" value="1"/>
</dbReference>
<dbReference type="FunFam" id="3.20.20.210:FF:000001">
    <property type="entry name" value="Uroporphyrinogen decarboxylase"/>
    <property type="match status" value="1"/>
</dbReference>
<dbReference type="Gene3D" id="3.20.20.210">
    <property type="match status" value="1"/>
</dbReference>
<dbReference type="HAMAP" id="MF_00218">
    <property type="entry name" value="URO_D"/>
    <property type="match status" value="1"/>
</dbReference>
<dbReference type="InterPro" id="IPR038071">
    <property type="entry name" value="UROD/MetE-like_sf"/>
</dbReference>
<dbReference type="InterPro" id="IPR006361">
    <property type="entry name" value="Uroporphyrinogen_deCO2ase_HemE"/>
</dbReference>
<dbReference type="InterPro" id="IPR000257">
    <property type="entry name" value="Uroporphyrinogen_deCOase"/>
</dbReference>
<dbReference type="NCBIfam" id="TIGR01464">
    <property type="entry name" value="hemE"/>
    <property type="match status" value="1"/>
</dbReference>
<dbReference type="PANTHER" id="PTHR21091">
    <property type="entry name" value="METHYLTETRAHYDROFOLATE:HOMOCYSTEINE METHYLTRANSFERASE RELATED"/>
    <property type="match status" value="1"/>
</dbReference>
<dbReference type="PANTHER" id="PTHR21091:SF169">
    <property type="entry name" value="UROPORPHYRINOGEN DECARBOXYLASE"/>
    <property type="match status" value="1"/>
</dbReference>
<dbReference type="Pfam" id="PF01208">
    <property type="entry name" value="URO-D"/>
    <property type="match status" value="1"/>
</dbReference>
<dbReference type="SUPFAM" id="SSF51726">
    <property type="entry name" value="UROD/MetE-like"/>
    <property type="match status" value="1"/>
</dbReference>
<dbReference type="PROSITE" id="PS00906">
    <property type="entry name" value="UROD_1"/>
    <property type="match status" value="1"/>
</dbReference>
<dbReference type="PROSITE" id="PS00907">
    <property type="entry name" value="UROD_2"/>
    <property type="match status" value="1"/>
</dbReference>
<feature type="chain" id="PRO_1000023882" description="Uroporphyrinogen decarboxylase">
    <location>
        <begin position="1"/>
        <end position="364"/>
    </location>
</feature>
<feature type="binding site" evidence="1">
    <location>
        <begin position="28"/>
        <end position="32"/>
    </location>
    <ligand>
        <name>substrate</name>
    </ligand>
</feature>
<feature type="binding site" evidence="1">
    <location>
        <position position="78"/>
    </location>
    <ligand>
        <name>substrate</name>
    </ligand>
</feature>
<feature type="binding site" evidence="1">
    <location>
        <position position="160"/>
    </location>
    <ligand>
        <name>substrate</name>
    </ligand>
</feature>
<feature type="binding site" evidence="1">
    <location>
        <position position="215"/>
    </location>
    <ligand>
        <name>substrate</name>
    </ligand>
</feature>
<feature type="binding site" evidence="1">
    <location>
        <position position="333"/>
    </location>
    <ligand>
        <name>substrate</name>
    </ligand>
</feature>
<feature type="site" description="Transition state stabilizer" evidence="1">
    <location>
        <position position="78"/>
    </location>
</feature>
<organism>
    <name type="scientific">Burkholderia pseudomallei (strain 1106a)</name>
    <dbReference type="NCBI Taxonomy" id="357348"/>
    <lineage>
        <taxon>Bacteria</taxon>
        <taxon>Pseudomonadati</taxon>
        <taxon>Pseudomonadota</taxon>
        <taxon>Betaproteobacteria</taxon>
        <taxon>Burkholderiales</taxon>
        <taxon>Burkholderiaceae</taxon>
        <taxon>Burkholderia</taxon>
        <taxon>pseudomallei group</taxon>
    </lineage>
</organism>
<gene>
    <name evidence="1" type="primary">hemE</name>
    <name type="ordered locus">BURPS1106A_4036</name>
</gene>
<reference key="1">
    <citation type="journal article" date="2010" name="Genome Biol. Evol.">
        <title>Continuing evolution of Burkholderia mallei through genome reduction and large-scale rearrangements.</title>
        <authorList>
            <person name="Losada L."/>
            <person name="Ronning C.M."/>
            <person name="DeShazer D."/>
            <person name="Woods D."/>
            <person name="Fedorova N."/>
            <person name="Kim H.S."/>
            <person name="Shabalina S.A."/>
            <person name="Pearson T.R."/>
            <person name="Brinkac L."/>
            <person name="Tan P."/>
            <person name="Nandi T."/>
            <person name="Crabtree J."/>
            <person name="Badger J."/>
            <person name="Beckstrom-Sternberg S."/>
            <person name="Saqib M."/>
            <person name="Schutzer S.E."/>
            <person name="Keim P."/>
            <person name="Nierman W.C."/>
        </authorList>
    </citation>
    <scope>NUCLEOTIDE SEQUENCE [LARGE SCALE GENOMIC DNA]</scope>
    <source>
        <strain>1106a</strain>
    </source>
</reference>
<keyword id="KW-0963">Cytoplasm</keyword>
<keyword id="KW-0210">Decarboxylase</keyword>
<keyword id="KW-0456">Lyase</keyword>
<keyword id="KW-0627">Porphyrin biosynthesis</keyword>
<comment type="function">
    <text evidence="1">Catalyzes the decarboxylation of four acetate groups of uroporphyrinogen-III to yield coproporphyrinogen-III.</text>
</comment>
<comment type="catalytic activity">
    <reaction evidence="1">
        <text>uroporphyrinogen III + 4 H(+) = coproporphyrinogen III + 4 CO2</text>
        <dbReference type="Rhea" id="RHEA:19865"/>
        <dbReference type="ChEBI" id="CHEBI:15378"/>
        <dbReference type="ChEBI" id="CHEBI:16526"/>
        <dbReference type="ChEBI" id="CHEBI:57308"/>
        <dbReference type="ChEBI" id="CHEBI:57309"/>
        <dbReference type="EC" id="4.1.1.37"/>
    </reaction>
</comment>
<comment type="pathway">
    <text evidence="1">Porphyrin-containing compound metabolism; protoporphyrin-IX biosynthesis; coproporphyrinogen-III from 5-aminolevulinate: step 4/4.</text>
</comment>
<comment type="subunit">
    <text evidence="1">Homodimer.</text>
</comment>
<comment type="subcellular location">
    <subcellularLocation>
        <location evidence="1">Cytoplasm</location>
    </subcellularLocation>
</comment>
<comment type="similarity">
    <text evidence="1">Belongs to the uroporphyrinogen decarboxylase family.</text>
</comment>
<proteinExistence type="inferred from homology"/>
<name>DCUP_BURP0</name>
<sequence>MAQTLLNDTFLRALLREPTDYTPIWLMRQAGRYLPEYNATRARAGSFLGLAKQPDYATEVTLQPLERFPLDAAILFSDILTIPDAMGLGLDFAAGEGPKFAHPVRTEADVAKLAVPDIGATLGYVTDAVREIRRALTDGEGRQRVPLIGFSGSPWTLACYMVEGGGSDDFRTVKSMAYARPDLMHRILDINAQAVAAYLNAQIEAGAQAVMIFDTWGGALADGAYQRFSLDYVRRVLAQLKREHDGARVPAIAFTKGGGLWLEELAATGVDAVGLDWTVNLGRARERVAGRVALQGNLDPTILFAPPEAIRAEARAVLDSYGNHPGHVFNLGHGISQFTPPEHVAELVDEVHRHSRAIRSGAGS</sequence>
<protein>
    <recommendedName>
        <fullName evidence="1">Uroporphyrinogen decarboxylase</fullName>
        <shortName evidence="1">UPD</shortName>
        <shortName evidence="1">URO-D</shortName>
        <ecNumber evidence="1">4.1.1.37</ecNumber>
    </recommendedName>
</protein>
<evidence type="ECO:0000255" key="1">
    <source>
        <dbReference type="HAMAP-Rule" id="MF_00218"/>
    </source>
</evidence>